<comment type="function">
    <text evidence="1">One of the primary rRNA binding proteins, it binds directly to 16S rRNA where it helps nucleate assembly of the platform of the 30S subunit by binding and bridging several RNA helices of the 16S rRNA.</text>
</comment>
<comment type="function">
    <text evidence="1">Forms an intersubunit bridge (bridge B4) with the 23S rRNA of the 50S subunit in the ribosome.</text>
</comment>
<comment type="subunit">
    <text evidence="1">Part of the 30S ribosomal subunit. Forms a bridge to the 50S subunit in the 70S ribosome, contacting the 23S rRNA.</text>
</comment>
<comment type="similarity">
    <text evidence="1">Belongs to the universal ribosomal protein uS15 family.</text>
</comment>
<protein>
    <recommendedName>
        <fullName evidence="1">Small ribosomal subunit protein uS15</fullName>
    </recommendedName>
    <alternativeName>
        <fullName evidence="2">30S ribosomal protein S15</fullName>
    </alternativeName>
</protein>
<reference key="1">
    <citation type="journal article" date="2010" name="Appl. Environ. Microbiol.">
        <title>Conserved symbiotic plasmid DNA sequences in the multireplicon pangenomic structure of Rhizobium etli.</title>
        <authorList>
            <person name="Gonzalez V."/>
            <person name="Acosta J.L."/>
            <person name="Santamaria R.I."/>
            <person name="Bustos P."/>
            <person name="Fernandez J.L."/>
            <person name="Hernandez Gonzalez I.L."/>
            <person name="Diaz R."/>
            <person name="Flores M."/>
            <person name="Palacios R."/>
            <person name="Mora J."/>
            <person name="Davila G."/>
        </authorList>
    </citation>
    <scope>NUCLEOTIDE SEQUENCE [LARGE SCALE GENOMIC DNA]</scope>
    <source>
        <strain>CIAT 652</strain>
    </source>
</reference>
<proteinExistence type="inferred from homology"/>
<accession>B3PXD9</accession>
<feature type="chain" id="PRO_1000143158" description="Small ribosomal subunit protein uS15">
    <location>
        <begin position="1"/>
        <end position="89"/>
    </location>
</feature>
<keyword id="KW-0687">Ribonucleoprotein</keyword>
<keyword id="KW-0689">Ribosomal protein</keyword>
<keyword id="KW-0694">RNA-binding</keyword>
<keyword id="KW-0699">rRNA-binding</keyword>
<gene>
    <name evidence="1" type="primary">rpsO</name>
    <name type="ordered locus">RHECIAT_CH0000149</name>
</gene>
<name>RS15_RHIE6</name>
<sequence length="89" mass="10172">MSITAERKAALIKEYATAEGDTGSPEVQVAILTERINNLTEHFKDHKKDNHSRRGLLTMVSSRRSLLDYLKKKDEGRYSKLINSLGIRR</sequence>
<dbReference type="EMBL" id="CP001074">
    <property type="protein sequence ID" value="ACE89145.1"/>
    <property type="molecule type" value="Genomic_DNA"/>
</dbReference>
<dbReference type="SMR" id="B3PXD9"/>
<dbReference type="KEGG" id="rec:RHECIAT_CH0000149"/>
<dbReference type="eggNOG" id="COG0184">
    <property type="taxonomic scope" value="Bacteria"/>
</dbReference>
<dbReference type="HOGENOM" id="CLU_148518_0_0_5"/>
<dbReference type="Proteomes" id="UP000008817">
    <property type="component" value="Chromosome"/>
</dbReference>
<dbReference type="GO" id="GO:0022627">
    <property type="term" value="C:cytosolic small ribosomal subunit"/>
    <property type="evidence" value="ECO:0007669"/>
    <property type="project" value="TreeGrafter"/>
</dbReference>
<dbReference type="GO" id="GO:0019843">
    <property type="term" value="F:rRNA binding"/>
    <property type="evidence" value="ECO:0007669"/>
    <property type="project" value="UniProtKB-UniRule"/>
</dbReference>
<dbReference type="GO" id="GO:0003735">
    <property type="term" value="F:structural constituent of ribosome"/>
    <property type="evidence" value="ECO:0007669"/>
    <property type="project" value="InterPro"/>
</dbReference>
<dbReference type="GO" id="GO:0006412">
    <property type="term" value="P:translation"/>
    <property type="evidence" value="ECO:0007669"/>
    <property type="project" value="UniProtKB-UniRule"/>
</dbReference>
<dbReference type="CDD" id="cd00353">
    <property type="entry name" value="Ribosomal_S15p_S13e"/>
    <property type="match status" value="1"/>
</dbReference>
<dbReference type="FunFam" id="1.10.287.10:FF:000002">
    <property type="entry name" value="30S ribosomal protein S15"/>
    <property type="match status" value="1"/>
</dbReference>
<dbReference type="Gene3D" id="6.10.250.3130">
    <property type="match status" value="1"/>
</dbReference>
<dbReference type="Gene3D" id="1.10.287.10">
    <property type="entry name" value="S15/NS1, RNA-binding"/>
    <property type="match status" value="1"/>
</dbReference>
<dbReference type="HAMAP" id="MF_01343_B">
    <property type="entry name" value="Ribosomal_uS15_B"/>
    <property type="match status" value="1"/>
</dbReference>
<dbReference type="InterPro" id="IPR000589">
    <property type="entry name" value="Ribosomal_uS15"/>
</dbReference>
<dbReference type="InterPro" id="IPR005290">
    <property type="entry name" value="Ribosomal_uS15_bac-type"/>
</dbReference>
<dbReference type="InterPro" id="IPR009068">
    <property type="entry name" value="uS15_NS1_RNA-bd_sf"/>
</dbReference>
<dbReference type="NCBIfam" id="TIGR00952">
    <property type="entry name" value="S15_bact"/>
    <property type="match status" value="1"/>
</dbReference>
<dbReference type="PANTHER" id="PTHR23321">
    <property type="entry name" value="RIBOSOMAL PROTEIN S15, BACTERIAL AND ORGANELLAR"/>
    <property type="match status" value="1"/>
</dbReference>
<dbReference type="PANTHER" id="PTHR23321:SF26">
    <property type="entry name" value="SMALL RIBOSOMAL SUBUNIT PROTEIN US15M"/>
    <property type="match status" value="1"/>
</dbReference>
<dbReference type="Pfam" id="PF00312">
    <property type="entry name" value="Ribosomal_S15"/>
    <property type="match status" value="1"/>
</dbReference>
<dbReference type="SMART" id="SM01387">
    <property type="entry name" value="Ribosomal_S15"/>
    <property type="match status" value="1"/>
</dbReference>
<dbReference type="SUPFAM" id="SSF47060">
    <property type="entry name" value="S15/NS1 RNA-binding domain"/>
    <property type="match status" value="1"/>
</dbReference>
<dbReference type="PROSITE" id="PS00362">
    <property type="entry name" value="RIBOSOMAL_S15"/>
    <property type="match status" value="1"/>
</dbReference>
<evidence type="ECO:0000255" key="1">
    <source>
        <dbReference type="HAMAP-Rule" id="MF_01343"/>
    </source>
</evidence>
<evidence type="ECO:0000305" key="2"/>
<organism>
    <name type="scientific">Rhizobium etli (strain CIAT 652)</name>
    <dbReference type="NCBI Taxonomy" id="491916"/>
    <lineage>
        <taxon>Bacteria</taxon>
        <taxon>Pseudomonadati</taxon>
        <taxon>Pseudomonadota</taxon>
        <taxon>Alphaproteobacteria</taxon>
        <taxon>Hyphomicrobiales</taxon>
        <taxon>Rhizobiaceae</taxon>
        <taxon>Rhizobium/Agrobacterium group</taxon>
        <taxon>Rhizobium</taxon>
    </lineage>
</organism>